<feature type="chain" id="PRO_0000225808" description="UPF0145 protein BCE33L4874">
    <location>
        <begin position="1"/>
        <end position="103"/>
    </location>
</feature>
<accession>Q631H3</accession>
<organism>
    <name type="scientific">Bacillus cereus (strain ZK / E33L)</name>
    <dbReference type="NCBI Taxonomy" id="288681"/>
    <lineage>
        <taxon>Bacteria</taxon>
        <taxon>Bacillati</taxon>
        <taxon>Bacillota</taxon>
        <taxon>Bacilli</taxon>
        <taxon>Bacillales</taxon>
        <taxon>Bacillaceae</taxon>
        <taxon>Bacillus</taxon>
        <taxon>Bacillus cereus group</taxon>
    </lineage>
</organism>
<name>Y4874_BACCZ</name>
<reference key="1">
    <citation type="journal article" date="2006" name="J. Bacteriol.">
        <title>Pathogenomic sequence analysis of Bacillus cereus and Bacillus thuringiensis isolates closely related to Bacillus anthracis.</title>
        <authorList>
            <person name="Han C.S."/>
            <person name="Xie G."/>
            <person name="Challacombe J.F."/>
            <person name="Altherr M.R."/>
            <person name="Bhotika S.S."/>
            <person name="Bruce D."/>
            <person name="Campbell C.S."/>
            <person name="Campbell M.L."/>
            <person name="Chen J."/>
            <person name="Chertkov O."/>
            <person name="Cleland C."/>
            <person name="Dimitrijevic M."/>
            <person name="Doggett N.A."/>
            <person name="Fawcett J.J."/>
            <person name="Glavina T."/>
            <person name="Goodwin L.A."/>
            <person name="Hill K.K."/>
            <person name="Hitchcock P."/>
            <person name="Jackson P.J."/>
            <person name="Keim P."/>
            <person name="Kewalramani A.R."/>
            <person name="Longmire J."/>
            <person name="Lucas S."/>
            <person name="Malfatti S."/>
            <person name="McMurry K."/>
            <person name="Meincke L.J."/>
            <person name="Misra M."/>
            <person name="Moseman B.L."/>
            <person name="Mundt M."/>
            <person name="Munk A.C."/>
            <person name="Okinaka R.T."/>
            <person name="Parson-Quintana B."/>
            <person name="Reilly L.P."/>
            <person name="Richardson P."/>
            <person name="Robinson D.L."/>
            <person name="Rubin E."/>
            <person name="Saunders E."/>
            <person name="Tapia R."/>
            <person name="Tesmer J.G."/>
            <person name="Thayer N."/>
            <person name="Thompson L.S."/>
            <person name="Tice H."/>
            <person name="Ticknor L.O."/>
            <person name="Wills P.L."/>
            <person name="Brettin T.S."/>
            <person name="Gilna P."/>
        </authorList>
    </citation>
    <scope>NUCLEOTIDE SEQUENCE [LARGE SCALE GENOMIC DNA]</scope>
    <source>
        <strain>ZK / E33L</strain>
    </source>
</reference>
<gene>
    <name type="ordered locus">BCE33L4874</name>
</gene>
<sequence length="103" mass="11150">MIVTTTSTIQGKEIIDYVDIVNGEAIMGANIVRDLFASVRDVVGGRSGAYESKLKEARDIAMEEMKTLARQKNANAIVGIDVDYEVVREGMLMVAVSGTAVRI</sequence>
<proteinExistence type="inferred from homology"/>
<protein>
    <recommendedName>
        <fullName evidence="1">UPF0145 protein BCE33L4874</fullName>
    </recommendedName>
</protein>
<evidence type="ECO:0000255" key="1">
    <source>
        <dbReference type="HAMAP-Rule" id="MF_00338"/>
    </source>
</evidence>
<comment type="similarity">
    <text evidence="1">Belongs to the UPF0145 family.</text>
</comment>
<dbReference type="EMBL" id="CP000001">
    <property type="protein sequence ID" value="AAU15405.1"/>
    <property type="molecule type" value="Genomic_DNA"/>
</dbReference>
<dbReference type="RefSeq" id="WP_000637521.1">
    <property type="nucleotide sequence ID" value="NZ_CP009968.1"/>
</dbReference>
<dbReference type="SMR" id="Q631H3"/>
<dbReference type="KEGG" id="bcz:BCE33L4874"/>
<dbReference type="PATRIC" id="fig|288681.22.peg.480"/>
<dbReference type="Proteomes" id="UP000002612">
    <property type="component" value="Chromosome"/>
</dbReference>
<dbReference type="Gene3D" id="3.30.110.70">
    <property type="entry name" value="Hypothetical protein apc22750. Chain B"/>
    <property type="match status" value="1"/>
</dbReference>
<dbReference type="HAMAP" id="MF_00338">
    <property type="entry name" value="UPF0145"/>
    <property type="match status" value="1"/>
</dbReference>
<dbReference type="InterPro" id="IPR035439">
    <property type="entry name" value="UPF0145_dom_sf"/>
</dbReference>
<dbReference type="InterPro" id="IPR002765">
    <property type="entry name" value="UPF0145_YbjQ-like"/>
</dbReference>
<dbReference type="NCBIfam" id="NF009495">
    <property type="entry name" value="PRK12855.1"/>
    <property type="match status" value="1"/>
</dbReference>
<dbReference type="NCBIfam" id="NF009496">
    <property type="entry name" value="PRK12856.1"/>
    <property type="match status" value="1"/>
</dbReference>
<dbReference type="PANTHER" id="PTHR34068">
    <property type="entry name" value="UPF0145 PROTEIN YBJQ"/>
    <property type="match status" value="1"/>
</dbReference>
<dbReference type="PANTHER" id="PTHR34068:SF1">
    <property type="entry name" value="UPF0145 PROTEIN YBJQ"/>
    <property type="match status" value="1"/>
</dbReference>
<dbReference type="Pfam" id="PF01906">
    <property type="entry name" value="YbjQ_1"/>
    <property type="match status" value="1"/>
</dbReference>
<dbReference type="SUPFAM" id="SSF117782">
    <property type="entry name" value="YbjQ-like"/>
    <property type="match status" value="1"/>
</dbReference>